<keyword id="KW-0066">ATP synthesis</keyword>
<keyword id="KW-0067">ATP-binding</keyword>
<keyword id="KW-1003">Cell membrane</keyword>
<keyword id="KW-0139">CF(1)</keyword>
<keyword id="KW-0375">Hydrogen ion transport</keyword>
<keyword id="KW-0406">Ion transport</keyword>
<keyword id="KW-0472">Membrane</keyword>
<keyword id="KW-0547">Nucleotide-binding</keyword>
<keyword id="KW-1185">Reference proteome</keyword>
<keyword id="KW-1278">Translocase</keyword>
<keyword id="KW-0813">Transport</keyword>
<comment type="function">
    <text evidence="1">Produces ATP from ADP in the presence of a proton gradient across the membrane. The alpha chain is a regulatory subunit.</text>
</comment>
<comment type="catalytic activity">
    <reaction evidence="1">
        <text>ATP + H2O + 4 H(+)(in) = ADP + phosphate + 5 H(+)(out)</text>
        <dbReference type="Rhea" id="RHEA:57720"/>
        <dbReference type="ChEBI" id="CHEBI:15377"/>
        <dbReference type="ChEBI" id="CHEBI:15378"/>
        <dbReference type="ChEBI" id="CHEBI:30616"/>
        <dbReference type="ChEBI" id="CHEBI:43474"/>
        <dbReference type="ChEBI" id="CHEBI:456216"/>
        <dbReference type="EC" id="7.1.2.2"/>
    </reaction>
</comment>
<comment type="subunit">
    <text evidence="1">F-type ATPases have 2 components, CF(1) - the catalytic core - and CF(0) - the membrane proton channel. CF(1) has five subunits: alpha(3), beta(3), gamma(1), delta(1), epsilon(1). CF(0) has three main subunits: a(1), b(2) and c(9-12). The alpha and beta chains form an alternating ring which encloses part of the gamma chain. CF(1) is attached to CF(0) by a central stalk formed by the gamma and epsilon chains, while a peripheral stalk is formed by the delta and b chains.</text>
</comment>
<comment type="subcellular location">
    <subcellularLocation>
        <location evidence="1">Cell membrane</location>
        <topology evidence="1">Peripheral membrane protein</topology>
    </subcellularLocation>
</comment>
<comment type="similarity">
    <text evidence="1">Belongs to the ATPase alpha/beta chains family.</text>
</comment>
<gene>
    <name evidence="1" type="primary">atpA</name>
    <name type="ordered locus">SAG0861</name>
</gene>
<organism>
    <name type="scientific">Streptococcus agalactiae serotype V (strain ATCC BAA-611 / 2603 V/R)</name>
    <dbReference type="NCBI Taxonomy" id="208435"/>
    <lineage>
        <taxon>Bacteria</taxon>
        <taxon>Bacillati</taxon>
        <taxon>Bacillota</taxon>
        <taxon>Bacilli</taxon>
        <taxon>Lactobacillales</taxon>
        <taxon>Streptococcaceae</taxon>
        <taxon>Streptococcus</taxon>
    </lineage>
</organism>
<protein>
    <recommendedName>
        <fullName evidence="1">ATP synthase subunit alpha</fullName>
        <ecNumber evidence="1">7.1.2.2</ecNumber>
    </recommendedName>
    <alternativeName>
        <fullName evidence="1">ATP synthase F1 sector subunit alpha</fullName>
    </alternativeName>
    <alternativeName>
        <fullName evidence="1">F-ATPase subunit alpha</fullName>
    </alternativeName>
</protein>
<dbReference type="EC" id="7.1.2.2" evidence="1"/>
<dbReference type="EMBL" id="AE009948">
    <property type="protein sequence ID" value="AAM99747.1"/>
    <property type="molecule type" value="Genomic_DNA"/>
</dbReference>
<dbReference type="RefSeq" id="NP_687875.1">
    <property type="nucleotide sequence ID" value="NC_004116.1"/>
</dbReference>
<dbReference type="RefSeq" id="WP_000996613.1">
    <property type="nucleotide sequence ID" value="NC_004116.1"/>
</dbReference>
<dbReference type="SMR" id="Q8E074"/>
<dbReference type="STRING" id="208435.SAG0861"/>
<dbReference type="GeneID" id="66885811"/>
<dbReference type="KEGG" id="sag:SAG0861"/>
<dbReference type="PATRIC" id="fig|208435.3.peg.868"/>
<dbReference type="HOGENOM" id="CLU_010091_2_1_9"/>
<dbReference type="OrthoDB" id="9803053at2"/>
<dbReference type="Proteomes" id="UP000000821">
    <property type="component" value="Chromosome"/>
</dbReference>
<dbReference type="GO" id="GO:0005886">
    <property type="term" value="C:plasma membrane"/>
    <property type="evidence" value="ECO:0007669"/>
    <property type="project" value="UniProtKB-SubCell"/>
</dbReference>
<dbReference type="GO" id="GO:0045259">
    <property type="term" value="C:proton-transporting ATP synthase complex"/>
    <property type="evidence" value="ECO:0007669"/>
    <property type="project" value="UniProtKB-KW"/>
</dbReference>
<dbReference type="GO" id="GO:0043531">
    <property type="term" value="F:ADP binding"/>
    <property type="evidence" value="ECO:0007669"/>
    <property type="project" value="TreeGrafter"/>
</dbReference>
<dbReference type="GO" id="GO:0005524">
    <property type="term" value="F:ATP binding"/>
    <property type="evidence" value="ECO:0007669"/>
    <property type="project" value="UniProtKB-UniRule"/>
</dbReference>
<dbReference type="GO" id="GO:0046933">
    <property type="term" value="F:proton-transporting ATP synthase activity, rotational mechanism"/>
    <property type="evidence" value="ECO:0007669"/>
    <property type="project" value="UniProtKB-UniRule"/>
</dbReference>
<dbReference type="CDD" id="cd18113">
    <property type="entry name" value="ATP-synt_F1_alpha_C"/>
    <property type="match status" value="1"/>
</dbReference>
<dbReference type="CDD" id="cd18116">
    <property type="entry name" value="ATP-synt_F1_alpha_N"/>
    <property type="match status" value="1"/>
</dbReference>
<dbReference type="CDD" id="cd01132">
    <property type="entry name" value="F1-ATPase_alpha_CD"/>
    <property type="match status" value="1"/>
</dbReference>
<dbReference type="FunFam" id="1.20.150.20:FF:000001">
    <property type="entry name" value="ATP synthase subunit alpha"/>
    <property type="match status" value="1"/>
</dbReference>
<dbReference type="FunFam" id="2.40.30.20:FF:000001">
    <property type="entry name" value="ATP synthase subunit alpha"/>
    <property type="match status" value="1"/>
</dbReference>
<dbReference type="FunFam" id="3.40.50.300:FF:000002">
    <property type="entry name" value="ATP synthase subunit alpha"/>
    <property type="match status" value="1"/>
</dbReference>
<dbReference type="Gene3D" id="2.40.30.20">
    <property type="match status" value="1"/>
</dbReference>
<dbReference type="Gene3D" id="1.20.150.20">
    <property type="entry name" value="ATP synthase alpha/beta chain, C-terminal domain"/>
    <property type="match status" value="1"/>
</dbReference>
<dbReference type="Gene3D" id="3.40.50.300">
    <property type="entry name" value="P-loop containing nucleotide triphosphate hydrolases"/>
    <property type="match status" value="1"/>
</dbReference>
<dbReference type="HAMAP" id="MF_01346">
    <property type="entry name" value="ATP_synth_alpha_bact"/>
    <property type="match status" value="1"/>
</dbReference>
<dbReference type="InterPro" id="IPR023366">
    <property type="entry name" value="ATP_synth_asu-like_sf"/>
</dbReference>
<dbReference type="InterPro" id="IPR000793">
    <property type="entry name" value="ATP_synth_asu_C"/>
</dbReference>
<dbReference type="InterPro" id="IPR038376">
    <property type="entry name" value="ATP_synth_asu_C_sf"/>
</dbReference>
<dbReference type="InterPro" id="IPR033732">
    <property type="entry name" value="ATP_synth_F1_a_nt-bd_dom"/>
</dbReference>
<dbReference type="InterPro" id="IPR005294">
    <property type="entry name" value="ATP_synth_F1_asu"/>
</dbReference>
<dbReference type="InterPro" id="IPR004100">
    <property type="entry name" value="ATPase_F1/V1/A1_a/bsu_N"/>
</dbReference>
<dbReference type="InterPro" id="IPR036121">
    <property type="entry name" value="ATPase_F1/V1/A1_a/bsu_N_sf"/>
</dbReference>
<dbReference type="InterPro" id="IPR000194">
    <property type="entry name" value="ATPase_F1/V1/A1_a/bsu_nucl-bd"/>
</dbReference>
<dbReference type="InterPro" id="IPR027417">
    <property type="entry name" value="P-loop_NTPase"/>
</dbReference>
<dbReference type="NCBIfam" id="TIGR00962">
    <property type="entry name" value="atpA"/>
    <property type="match status" value="1"/>
</dbReference>
<dbReference type="NCBIfam" id="NF009884">
    <property type="entry name" value="PRK13343.1"/>
    <property type="match status" value="1"/>
</dbReference>
<dbReference type="PANTHER" id="PTHR48082">
    <property type="entry name" value="ATP SYNTHASE SUBUNIT ALPHA, MITOCHONDRIAL"/>
    <property type="match status" value="1"/>
</dbReference>
<dbReference type="PANTHER" id="PTHR48082:SF2">
    <property type="entry name" value="ATP SYNTHASE SUBUNIT ALPHA, MITOCHONDRIAL"/>
    <property type="match status" value="1"/>
</dbReference>
<dbReference type="Pfam" id="PF00006">
    <property type="entry name" value="ATP-synt_ab"/>
    <property type="match status" value="1"/>
</dbReference>
<dbReference type="Pfam" id="PF00306">
    <property type="entry name" value="ATP-synt_ab_C"/>
    <property type="match status" value="1"/>
</dbReference>
<dbReference type="Pfam" id="PF02874">
    <property type="entry name" value="ATP-synt_ab_N"/>
    <property type="match status" value="1"/>
</dbReference>
<dbReference type="PIRSF" id="PIRSF039088">
    <property type="entry name" value="F_ATPase_subunit_alpha"/>
    <property type="match status" value="1"/>
</dbReference>
<dbReference type="SUPFAM" id="SSF47917">
    <property type="entry name" value="C-terminal domain of alpha and beta subunits of F1 ATP synthase"/>
    <property type="match status" value="1"/>
</dbReference>
<dbReference type="SUPFAM" id="SSF50615">
    <property type="entry name" value="N-terminal domain of alpha and beta subunits of F1 ATP synthase"/>
    <property type="match status" value="1"/>
</dbReference>
<dbReference type="SUPFAM" id="SSF52540">
    <property type="entry name" value="P-loop containing nucleoside triphosphate hydrolases"/>
    <property type="match status" value="1"/>
</dbReference>
<evidence type="ECO:0000255" key="1">
    <source>
        <dbReference type="HAMAP-Rule" id="MF_01346"/>
    </source>
</evidence>
<sequence length="501" mass="54607">MAINAQEISALIKKQIEDFQPNFDVTETGIVTYIGDGIARARGLDNAMSGELLEFSNGAYGMAQNLESNDVGIIILGDFSEIREGDVVKRTGKIMEVPVGEAMIGRVVNPLGQPVDGLGEIETTATRPVETPAPGVMQRKSVFEPLQTGLKAIDALVPIGRGQRELIIGDRQTGKTSVAIDAILNQKGQDMICIYVAIGQKESTVRTQVETLRKYGALDYTIVVTASASQPSPLLFIAPYAGVAMAEEFMYNGKHVLIVYDDLSKQAVAYRELSLLLRRPPGREAYPGDVFYLHSRLLERSAKVSDALGGGSITALPFIETQAGDISAYIATNVISITDGQIFLQENLFNSGIRPAIDAGSSVSRVGGAAQIKAMKRVAGTLRLDLASYRELEAFTQFGSDLDAATQAKLNRGRRTVEVLKQPLHKPLPVEKQVVILYALTHGFLDDVPVNDILAFEEALYDYFDAHYDNLFETIRTTKDLPEEAELDAAIQAFKDQSQFK</sequence>
<name>ATPA_STRA5</name>
<proteinExistence type="inferred from homology"/>
<accession>Q8E074</accession>
<feature type="chain" id="PRO_0000238363" description="ATP synthase subunit alpha">
    <location>
        <begin position="1"/>
        <end position="501"/>
    </location>
</feature>
<feature type="binding site" evidence="1">
    <location>
        <begin position="169"/>
        <end position="176"/>
    </location>
    <ligand>
        <name>ATP</name>
        <dbReference type="ChEBI" id="CHEBI:30616"/>
    </ligand>
</feature>
<feature type="site" description="Required for activity" evidence="1">
    <location>
        <position position="362"/>
    </location>
</feature>
<reference key="1">
    <citation type="journal article" date="2002" name="Proc. Natl. Acad. Sci. U.S.A.">
        <title>Complete genome sequence and comparative genomic analysis of an emerging human pathogen, serotype V Streptococcus agalactiae.</title>
        <authorList>
            <person name="Tettelin H."/>
            <person name="Masignani V."/>
            <person name="Cieslewicz M.J."/>
            <person name="Eisen J.A."/>
            <person name="Peterson S.N."/>
            <person name="Wessels M.R."/>
            <person name="Paulsen I.T."/>
            <person name="Nelson K.E."/>
            <person name="Margarit I."/>
            <person name="Read T.D."/>
            <person name="Madoff L.C."/>
            <person name="Wolf A.M."/>
            <person name="Beanan M.J."/>
            <person name="Brinkac L.M."/>
            <person name="Daugherty S.C."/>
            <person name="DeBoy R.T."/>
            <person name="Durkin A.S."/>
            <person name="Kolonay J.F."/>
            <person name="Madupu R."/>
            <person name="Lewis M.R."/>
            <person name="Radune D."/>
            <person name="Fedorova N.B."/>
            <person name="Scanlan D."/>
            <person name="Khouri H.M."/>
            <person name="Mulligan S."/>
            <person name="Carty H.A."/>
            <person name="Cline R.T."/>
            <person name="Van Aken S.E."/>
            <person name="Gill J."/>
            <person name="Scarselli M."/>
            <person name="Mora M."/>
            <person name="Iacobini E.T."/>
            <person name="Brettoni C."/>
            <person name="Galli G."/>
            <person name="Mariani M."/>
            <person name="Vegni F."/>
            <person name="Maione D."/>
            <person name="Rinaudo D."/>
            <person name="Rappuoli R."/>
            <person name="Telford J.L."/>
            <person name="Kasper D.L."/>
            <person name="Grandi G."/>
            <person name="Fraser C.M."/>
        </authorList>
    </citation>
    <scope>NUCLEOTIDE SEQUENCE [LARGE SCALE GENOMIC DNA]</scope>
    <source>
        <strain>ATCC BAA-611 / 2603 V/R</strain>
    </source>
</reference>